<feature type="chain" id="PRO_0000054498" description="Alcohol dehydrogenase">
    <location>
        <begin position="1"/>
        <end position="256"/>
    </location>
</feature>
<feature type="active site" description="Proton acceptor" evidence="2">
    <location>
        <position position="153"/>
    </location>
</feature>
<feature type="binding site" evidence="1">
    <location>
        <begin position="12"/>
        <end position="35"/>
    </location>
    <ligand>
        <name>NAD(+)</name>
        <dbReference type="ChEBI" id="CHEBI:57540"/>
    </ligand>
</feature>
<feature type="binding site" evidence="1">
    <location>
        <position position="140"/>
    </location>
    <ligand>
        <name>substrate</name>
    </ligand>
</feature>
<name>ADH_DROTS</name>
<organism>
    <name type="scientific">Drosophila tsacasi</name>
    <name type="common">Fruit fly</name>
    <dbReference type="NCBI Taxonomy" id="34677"/>
    <lineage>
        <taxon>Eukaryota</taxon>
        <taxon>Metazoa</taxon>
        <taxon>Ecdysozoa</taxon>
        <taxon>Arthropoda</taxon>
        <taxon>Hexapoda</taxon>
        <taxon>Insecta</taxon>
        <taxon>Pterygota</taxon>
        <taxon>Neoptera</taxon>
        <taxon>Endopterygota</taxon>
        <taxon>Diptera</taxon>
        <taxon>Brachycera</taxon>
        <taxon>Muscomorpha</taxon>
        <taxon>Ephydroidea</taxon>
        <taxon>Drosophilidae</taxon>
        <taxon>Drosophila</taxon>
        <taxon>Sophophora</taxon>
    </lineage>
</organism>
<evidence type="ECO:0000250" key="1"/>
<evidence type="ECO:0000255" key="2">
    <source>
        <dbReference type="PROSITE-ProRule" id="PRU10001"/>
    </source>
</evidence>
<evidence type="ECO:0000305" key="3"/>
<gene>
    <name type="primary">Adh</name>
</gene>
<reference key="1">
    <citation type="journal article" date="1991" name="J. Mol. Evol.">
        <title>Evidence for interspecific transfer of the transposable element mariner between Drosophila and Zaprionus.</title>
        <authorList>
            <person name="Maruyama K."/>
            <person name="Hartl D.L."/>
        </authorList>
    </citation>
    <scope>NUCLEOTIDE SEQUENCE [GENOMIC DNA]</scope>
</reference>
<proteinExistence type="inferred from homology"/>
<accession>P51550</accession>
<protein>
    <recommendedName>
        <fullName>Alcohol dehydrogenase</fullName>
        <ecNumber>1.1.1.1</ecNumber>
    </recommendedName>
</protein>
<sequence length="256" mass="27802">MSTTLTNKNVIFVAGLGGIGLDTSKELVKRDLKNLVILDRIDNPAAIAELKAINPKVTVTFYPYDVTVPITETTKLLKTIFAKVKTVDILINGAGILDDHQIERTIAVNYTGLVNTTTAILDFWDKRKGGPGGIICNIGSVTGFNAIYQVPVYSGTKAAVVNFTSSLAKLAPITGVTAYTVNPGITRTTLVHKFNSWLDVEPLVSEKLLAHPTQPSQACAENFVKAIELNKNGAIWKLDRGTLEPIQWTKHWDSGI</sequence>
<dbReference type="EC" id="1.1.1.1"/>
<dbReference type="EMBL" id="X63954">
    <property type="protein sequence ID" value="CAA45375.1"/>
    <property type="molecule type" value="Genomic_DNA"/>
</dbReference>
<dbReference type="SMR" id="P51550"/>
<dbReference type="GO" id="GO:0005829">
    <property type="term" value="C:cytosol"/>
    <property type="evidence" value="ECO:0007669"/>
    <property type="project" value="TreeGrafter"/>
</dbReference>
<dbReference type="GO" id="GO:0004022">
    <property type="term" value="F:alcohol dehydrogenase (NAD+) activity"/>
    <property type="evidence" value="ECO:0007669"/>
    <property type="project" value="UniProtKB-EC"/>
</dbReference>
<dbReference type="GO" id="GO:0006066">
    <property type="term" value="P:alcohol metabolic process"/>
    <property type="evidence" value="ECO:0007669"/>
    <property type="project" value="InterPro"/>
</dbReference>
<dbReference type="CDD" id="cd05323">
    <property type="entry name" value="ADH_SDR_c_like"/>
    <property type="match status" value="1"/>
</dbReference>
<dbReference type="FunFam" id="3.40.50.720:FF:000302">
    <property type="entry name" value="Alcohol dehydrogenase"/>
    <property type="match status" value="1"/>
</dbReference>
<dbReference type="Gene3D" id="3.40.50.720">
    <property type="entry name" value="NAD(P)-binding Rossmann-like Domain"/>
    <property type="match status" value="1"/>
</dbReference>
<dbReference type="InterPro" id="IPR002425">
    <property type="entry name" value="ADH_Drosophila-type"/>
</dbReference>
<dbReference type="InterPro" id="IPR036291">
    <property type="entry name" value="NAD(P)-bd_dom_sf"/>
</dbReference>
<dbReference type="InterPro" id="IPR020904">
    <property type="entry name" value="Sc_DH/Rdtase_CS"/>
</dbReference>
<dbReference type="InterPro" id="IPR002347">
    <property type="entry name" value="SDR_fam"/>
</dbReference>
<dbReference type="PANTHER" id="PTHR42901">
    <property type="entry name" value="ALCOHOL DEHYDROGENASE"/>
    <property type="match status" value="1"/>
</dbReference>
<dbReference type="PANTHER" id="PTHR42901:SF1">
    <property type="entry name" value="ALCOHOL DEHYDROGENASE"/>
    <property type="match status" value="1"/>
</dbReference>
<dbReference type="Pfam" id="PF00106">
    <property type="entry name" value="adh_short"/>
    <property type="match status" value="1"/>
</dbReference>
<dbReference type="PRINTS" id="PR01168">
    <property type="entry name" value="ALCDHDRGNASE"/>
</dbReference>
<dbReference type="PRINTS" id="PR01167">
    <property type="entry name" value="INSADHFAMILY"/>
</dbReference>
<dbReference type="PRINTS" id="PR00080">
    <property type="entry name" value="SDRFAMILY"/>
</dbReference>
<dbReference type="SUPFAM" id="SSF51735">
    <property type="entry name" value="NAD(P)-binding Rossmann-fold domains"/>
    <property type="match status" value="1"/>
</dbReference>
<dbReference type="PROSITE" id="PS00061">
    <property type="entry name" value="ADH_SHORT"/>
    <property type="match status" value="1"/>
</dbReference>
<keyword id="KW-0520">NAD</keyword>
<keyword id="KW-0560">Oxidoreductase</keyword>
<comment type="catalytic activity">
    <reaction evidence="2">
        <text>a primary alcohol + NAD(+) = an aldehyde + NADH + H(+)</text>
        <dbReference type="Rhea" id="RHEA:10736"/>
        <dbReference type="ChEBI" id="CHEBI:15378"/>
        <dbReference type="ChEBI" id="CHEBI:15734"/>
        <dbReference type="ChEBI" id="CHEBI:17478"/>
        <dbReference type="ChEBI" id="CHEBI:57540"/>
        <dbReference type="ChEBI" id="CHEBI:57945"/>
        <dbReference type="EC" id="1.1.1.1"/>
    </reaction>
</comment>
<comment type="catalytic activity">
    <reaction evidence="2">
        <text>a secondary alcohol + NAD(+) = a ketone + NADH + H(+)</text>
        <dbReference type="Rhea" id="RHEA:10740"/>
        <dbReference type="ChEBI" id="CHEBI:15378"/>
        <dbReference type="ChEBI" id="CHEBI:17087"/>
        <dbReference type="ChEBI" id="CHEBI:35681"/>
        <dbReference type="ChEBI" id="CHEBI:57540"/>
        <dbReference type="ChEBI" id="CHEBI:57945"/>
        <dbReference type="EC" id="1.1.1.1"/>
    </reaction>
</comment>
<comment type="subunit">
    <text>Homodimer.</text>
</comment>
<comment type="similarity">
    <text evidence="3">Belongs to the short-chain dehydrogenases/reductases (SDR) family.</text>
</comment>